<proteinExistence type="inferred from homology"/>
<sequence length="344" mass="37151">MTDQAPVTYAGPPRVLSGVQPSGALHLGNYLGALVKFTRLQHEIDTFIFVADLHAITVWQDPAALAQQTREIAAAYIASGLDPDKATIFPQSAVREHAELSWIFNCVARLGWLDRMTQFKEKSGKHKERSSVGLYTYPVLQAADILIYKATHVPVGEDQKQHLELTRDIAQKFNHDFNAPGFFPLPDPLIQGPGARVMSLRDGSAKMSKSDPSDYSRINLTDTADDIAAKVKKARTDPEPLPETIEELATRAEADNLVGIFAALAGKTKAEVLADYAGKGFGTFKPALAELAVESLAPVGERMRGLLGDPAVLDAILAKGAEKAREAAAPTLAEVKKLVGFWGA</sequence>
<name>SYW_CAUVC</name>
<gene>
    <name evidence="1" type="primary">trpS</name>
    <name type="ordered locus">CC_0064</name>
</gene>
<accession>Q9AC05</accession>
<feature type="chain" id="PRO_0000136616" description="Tryptophan--tRNA ligase">
    <location>
        <begin position="1"/>
        <end position="344"/>
    </location>
</feature>
<feature type="short sequence motif" description="'HIGH' region" evidence="1">
    <location>
        <begin position="21"/>
        <end position="29"/>
    </location>
</feature>
<feature type="short sequence motif" description="'KMSKS' region" evidence="1">
    <location>
        <begin position="206"/>
        <end position="210"/>
    </location>
</feature>
<feature type="binding site" evidence="1">
    <location>
        <begin position="20"/>
        <end position="22"/>
    </location>
    <ligand>
        <name>ATP</name>
        <dbReference type="ChEBI" id="CHEBI:30616"/>
    </ligand>
</feature>
<feature type="binding site" evidence="1">
    <location>
        <begin position="28"/>
        <end position="29"/>
    </location>
    <ligand>
        <name>ATP</name>
        <dbReference type="ChEBI" id="CHEBI:30616"/>
    </ligand>
</feature>
<feature type="binding site" evidence="1">
    <location>
        <position position="144"/>
    </location>
    <ligand>
        <name>L-tryptophan</name>
        <dbReference type="ChEBI" id="CHEBI:57912"/>
    </ligand>
</feature>
<feature type="binding site" evidence="1">
    <location>
        <begin position="156"/>
        <end position="158"/>
    </location>
    <ligand>
        <name>ATP</name>
        <dbReference type="ChEBI" id="CHEBI:30616"/>
    </ligand>
</feature>
<feature type="binding site" evidence="1">
    <location>
        <position position="197"/>
    </location>
    <ligand>
        <name>ATP</name>
        <dbReference type="ChEBI" id="CHEBI:30616"/>
    </ligand>
</feature>
<feature type="binding site" evidence="1">
    <location>
        <begin position="206"/>
        <end position="210"/>
    </location>
    <ligand>
        <name>ATP</name>
        <dbReference type="ChEBI" id="CHEBI:30616"/>
    </ligand>
</feature>
<comment type="function">
    <text evidence="1">Catalyzes the attachment of tryptophan to tRNA(Trp).</text>
</comment>
<comment type="catalytic activity">
    <reaction evidence="1">
        <text>tRNA(Trp) + L-tryptophan + ATP = L-tryptophyl-tRNA(Trp) + AMP + diphosphate + H(+)</text>
        <dbReference type="Rhea" id="RHEA:24080"/>
        <dbReference type="Rhea" id="RHEA-COMP:9671"/>
        <dbReference type="Rhea" id="RHEA-COMP:9705"/>
        <dbReference type="ChEBI" id="CHEBI:15378"/>
        <dbReference type="ChEBI" id="CHEBI:30616"/>
        <dbReference type="ChEBI" id="CHEBI:33019"/>
        <dbReference type="ChEBI" id="CHEBI:57912"/>
        <dbReference type="ChEBI" id="CHEBI:78442"/>
        <dbReference type="ChEBI" id="CHEBI:78535"/>
        <dbReference type="ChEBI" id="CHEBI:456215"/>
        <dbReference type="EC" id="6.1.1.2"/>
    </reaction>
</comment>
<comment type="subunit">
    <text evidence="1">Homodimer.</text>
</comment>
<comment type="subcellular location">
    <subcellularLocation>
        <location evidence="1">Cytoplasm</location>
    </subcellularLocation>
</comment>
<comment type="similarity">
    <text evidence="1">Belongs to the class-I aminoacyl-tRNA synthetase family.</text>
</comment>
<organism>
    <name type="scientific">Caulobacter vibrioides (strain ATCC 19089 / CIP 103742 / CB 15)</name>
    <name type="common">Caulobacter crescentus</name>
    <dbReference type="NCBI Taxonomy" id="190650"/>
    <lineage>
        <taxon>Bacteria</taxon>
        <taxon>Pseudomonadati</taxon>
        <taxon>Pseudomonadota</taxon>
        <taxon>Alphaproteobacteria</taxon>
        <taxon>Caulobacterales</taxon>
        <taxon>Caulobacteraceae</taxon>
        <taxon>Caulobacter</taxon>
    </lineage>
</organism>
<dbReference type="EC" id="6.1.1.2" evidence="1"/>
<dbReference type="EMBL" id="AE005673">
    <property type="protein sequence ID" value="AAK22051.1"/>
    <property type="molecule type" value="Genomic_DNA"/>
</dbReference>
<dbReference type="PIR" id="G87256">
    <property type="entry name" value="G87256"/>
</dbReference>
<dbReference type="RefSeq" id="NP_418883.1">
    <property type="nucleotide sequence ID" value="NC_002696.2"/>
</dbReference>
<dbReference type="RefSeq" id="WP_010917953.1">
    <property type="nucleotide sequence ID" value="NC_002696.2"/>
</dbReference>
<dbReference type="SMR" id="Q9AC05"/>
<dbReference type="STRING" id="190650.CC_0064"/>
<dbReference type="EnsemblBacteria" id="AAK22051">
    <property type="protein sequence ID" value="AAK22051"/>
    <property type="gene ID" value="CC_0064"/>
</dbReference>
<dbReference type="KEGG" id="ccr:CC_0064"/>
<dbReference type="PATRIC" id="fig|190650.5.peg.61"/>
<dbReference type="eggNOG" id="COG0180">
    <property type="taxonomic scope" value="Bacteria"/>
</dbReference>
<dbReference type="HOGENOM" id="CLU_029244_1_4_5"/>
<dbReference type="BioCyc" id="CAULO:CC0064-MONOMER"/>
<dbReference type="Proteomes" id="UP000001816">
    <property type="component" value="Chromosome"/>
</dbReference>
<dbReference type="GO" id="GO:0005829">
    <property type="term" value="C:cytosol"/>
    <property type="evidence" value="ECO:0007669"/>
    <property type="project" value="TreeGrafter"/>
</dbReference>
<dbReference type="GO" id="GO:0005524">
    <property type="term" value="F:ATP binding"/>
    <property type="evidence" value="ECO:0007669"/>
    <property type="project" value="UniProtKB-UniRule"/>
</dbReference>
<dbReference type="GO" id="GO:0004830">
    <property type="term" value="F:tryptophan-tRNA ligase activity"/>
    <property type="evidence" value="ECO:0007669"/>
    <property type="project" value="UniProtKB-UniRule"/>
</dbReference>
<dbReference type="GO" id="GO:0006436">
    <property type="term" value="P:tryptophanyl-tRNA aminoacylation"/>
    <property type="evidence" value="ECO:0007669"/>
    <property type="project" value="UniProtKB-UniRule"/>
</dbReference>
<dbReference type="CDD" id="cd00806">
    <property type="entry name" value="TrpRS_core"/>
    <property type="match status" value="1"/>
</dbReference>
<dbReference type="Gene3D" id="3.40.50.620">
    <property type="entry name" value="HUPs"/>
    <property type="match status" value="1"/>
</dbReference>
<dbReference type="Gene3D" id="1.10.240.10">
    <property type="entry name" value="Tyrosyl-Transfer RNA Synthetase"/>
    <property type="match status" value="1"/>
</dbReference>
<dbReference type="HAMAP" id="MF_00140_B">
    <property type="entry name" value="Trp_tRNA_synth_B"/>
    <property type="match status" value="1"/>
</dbReference>
<dbReference type="InterPro" id="IPR001412">
    <property type="entry name" value="aa-tRNA-synth_I_CS"/>
</dbReference>
<dbReference type="InterPro" id="IPR002305">
    <property type="entry name" value="aa-tRNA-synth_Ic"/>
</dbReference>
<dbReference type="InterPro" id="IPR014729">
    <property type="entry name" value="Rossmann-like_a/b/a_fold"/>
</dbReference>
<dbReference type="InterPro" id="IPR002306">
    <property type="entry name" value="Trp-tRNA-ligase"/>
</dbReference>
<dbReference type="InterPro" id="IPR024109">
    <property type="entry name" value="Trp-tRNA-ligase_bac-type"/>
</dbReference>
<dbReference type="InterPro" id="IPR050203">
    <property type="entry name" value="Trp-tRNA_synthetase"/>
</dbReference>
<dbReference type="NCBIfam" id="TIGR00233">
    <property type="entry name" value="trpS"/>
    <property type="match status" value="1"/>
</dbReference>
<dbReference type="PANTHER" id="PTHR43766">
    <property type="entry name" value="TRYPTOPHAN--TRNA LIGASE, MITOCHONDRIAL"/>
    <property type="match status" value="1"/>
</dbReference>
<dbReference type="PANTHER" id="PTHR43766:SF1">
    <property type="entry name" value="TRYPTOPHAN--TRNA LIGASE, MITOCHONDRIAL"/>
    <property type="match status" value="1"/>
</dbReference>
<dbReference type="Pfam" id="PF00579">
    <property type="entry name" value="tRNA-synt_1b"/>
    <property type="match status" value="1"/>
</dbReference>
<dbReference type="PRINTS" id="PR01039">
    <property type="entry name" value="TRNASYNTHTRP"/>
</dbReference>
<dbReference type="SUPFAM" id="SSF52374">
    <property type="entry name" value="Nucleotidylyl transferase"/>
    <property type="match status" value="1"/>
</dbReference>
<dbReference type="PROSITE" id="PS00178">
    <property type="entry name" value="AA_TRNA_LIGASE_I"/>
    <property type="match status" value="1"/>
</dbReference>
<protein>
    <recommendedName>
        <fullName evidence="1">Tryptophan--tRNA ligase</fullName>
        <ecNumber evidence="1">6.1.1.2</ecNumber>
    </recommendedName>
    <alternativeName>
        <fullName evidence="1">Tryptophanyl-tRNA synthetase</fullName>
        <shortName evidence="1">TrpRS</shortName>
    </alternativeName>
</protein>
<reference key="1">
    <citation type="journal article" date="2001" name="Proc. Natl. Acad. Sci. U.S.A.">
        <title>Complete genome sequence of Caulobacter crescentus.</title>
        <authorList>
            <person name="Nierman W.C."/>
            <person name="Feldblyum T.V."/>
            <person name="Laub M.T."/>
            <person name="Paulsen I.T."/>
            <person name="Nelson K.E."/>
            <person name="Eisen J.A."/>
            <person name="Heidelberg J.F."/>
            <person name="Alley M.R.K."/>
            <person name="Ohta N."/>
            <person name="Maddock J.R."/>
            <person name="Potocka I."/>
            <person name="Nelson W.C."/>
            <person name="Newton A."/>
            <person name="Stephens C."/>
            <person name="Phadke N.D."/>
            <person name="Ely B."/>
            <person name="DeBoy R.T."/>
            <person name="Dodson R.J."/>
            <person name="Durkin A.S."/>
            <person name="Gwinn M.L."/>
            <person name="Haft D.H."/>
            <person name="Kolonay J.F."/>
            <person name="Smit J."/>
            <person name="Craven M.B."/>
            <person name="Khouri H.M."/>
            <person name="Shetty J."/>
            <person name="Berry K.J."/>
            <person name="Utterback T.R."/>
            <person name="Tran K."/>
            <person name="Wolf A.M."/>
            <person name="Vamathevan J.J."/>
            <person name="Ermolaeva M.D."/>
            <person name="White O."/>
            <person name="Salzberg S.L."/>
            <person name="Venter J.C."/>
            <person name="Shapiro L."/>
            <person name="Fraser C.M."/>
        </authorList>
    </citation>
    <scope>NUCLEOTIDE SEQUENCE [LARGE SCALE GENOMIC DNA]</scope>
    <source>
        <strain>ATCC 19089 / CIP 103742 / CB 15</strain>
    </source>
</reference>
<keyword id="KW-0030">Aminoacyl-tRNA synthetase</keyword>
<keyword id="KW-0067">ATP-binding</keyword>
<keyword id="KW-0963">Cytoplasm</keyword>
<keyword id="KW-0436">Ligase</keyword>
<keyword id="KW-0547">Nucleotide-binding</keyword>
<keyword id="KW-0648">Protein biosynthesis</keyword>
<keyword id="KW-1185">Reference proteome</keyword>
<evidence type="ECO:0000255" key="1">
    <source>
        <dbReference type="HAMAP-Rule" id="MF_00140"/>
    </source>
</evidence>